<reference key="1">
    <citation type="journal article" date="1998" name="DNA Res.">
        <title>Complete sequence and gene organization of the genome of a hyper-thermophilic archaebacterium, Pyrococcus horikoshii OT3.</title>
        <authorList>
            <person name="Kawarabayasi Y."/>
            <person name="Sawada M."/>
            <person name="Horikawa H."/>
            <person name="Haikawa Y."/>
            <person name="Hino Y."/>
            <person name="Yamamoto S."/>
            <person name="Sekine M."/>
            <person name="Baba S."/>
            <person name="Kosugi H."/>
            <person name="Hosoyama A."/>
            <person name="Nagai Y."/>
            <person name="Sakai M."/>
            <person name="Ogura K."/>
            <person name="Otsuka R."/>
            <person name="Nakazawa H."/>
            <person name="Takamiya M."/>
            <person name="Ohfuku Y."/>
            <person name="Funahashi T."/>
            <person name="Tanaka T."/>
            <person name="Kudoh Y."/>
            <person name="Yamazaki J."/>
            <person name="Kushida N."/>
            <person name="Oguchi A."/>
            <person name="Aoki K."/>
            <person name="Yoshizawa T."/>
            <person name="Nakamura Y."/>
            <person name="Robb F.T."/>
            <person name="Horikoshi K."/>
            <person name="Masuchi Y."/>
            <person name="Shizuya H."/>
            <person name="Kikuchi H."/>
        </authorList>
    </citation>
    <scope>NUCLEOTIDE SEQUENCE [LARGE SCALE GENOMIC DNA]</scope>
    <source>
        <strain>ATCC 700860 / DSM 12428 / JCM 9974 / NBRC 100139 / OT-3</strain>
    </source>
</reference>
<proteinExistence type="predicted"/>
<keyword id="KW-0238">DNA-binding</keyword>
<keyword id="KW-0804">Transcription</keyword>
<keyword id="KW-0805">Transcription regulation</keyword>
<accession>O59579</accession>
<name>REG9_PYRHO</name>
<feature type="chain" id="PRO_0000111778" description="Uncharacterized HTH-type transcriptional regulator PH1916">
    <location>
        <begin position="1"/>
        <end position="150"/>
    </location>
</feature>
<feature type="domain" description="HTH asnC-type" evidence="1">
    <location>
        <begin position="5"/>
        <end position="66"/>
    </location>
</feature>
<feature type="DNA-binding region" description="H-T-H motif" evidence="1">
    <location>
        <begin position="24"/>
        <end position="43"/>
    </location>
</feature>
<gene>
    <name type="ordered locus">PH1916</name>
</gene>
<sequence length="150" mass="17165">MPEILDKVDRRLLEELKNNARENIATLSKKLGIPRTTVHYRIKRLVEEGIIEKFTIKPNYKKLNLGTTAFILIRYDPDSGLTQREVAEQIARIPGVYEVHLVAGEWDLLLKVRASNAEEIGRIVIDKLREIRGVGQTVTMVSFVTVKEEI</sequence>
<dbReference type="EMBL" id="BA000001">
    <property type="protein sequence ID" value="BAA31041.1"/>
    <property type="molecule type" value="Genomic_DNA"/>
</dbReference>
<dbReference type="PIR" id="B71206">
    <property type="entry name" value="B71206"/>
</dbReference>
<dbReference type="RefSeq" id="WP_010885981.1">
    <property type="nucleotide sequence ID" value="NC_000961.1"/>
</dbReference>
<dbReference type="SMR" id="O59579"/>
<dbReference type="STRING" id="70601.gene:9378926"/>
<dbReference type="EnsemblBacteria" id="BAA31041">
    <property type="protein sequence ID" value="BAA31041"/>
    <property type="gene ID" value="BAA31041"/>
</dbReference>
<dbReference type="GeneID" id="1442763"/>
<dbReference type="KEGG" id="pho:PH1916"/>
<dbReference type="eggNOG" id="arCOG01580">
    <property type="taxonomic scope" value="Archaea"/>
</dbReference>
<dbReference type="OrthoDB" id="6762at2157"/>
<dbReference type="Proteomes" id="UP000000752">
    <property type="component" value="Chromosome"/>
</dbReference>
<dbReference type="GO" id="GO:0005829">
    <property type="term" value="C:cytosol"/>
    <property type="evidence" value="ECO:0007669"/>
    <property type="project" value="TreeGrafter"/>
</dbReference>
<dbReference type="GO" id="GO:0043565">
    <property type="term" value="F:sequence-specific DNA binding"/>
    <property type="evidence" value="ECO:0007669"/>
    <property type="project" value="InterPro"/>
</dbReference>
<dbReference type="GO" id="GO:0043200">
    <property type="term" value="P:response to amino acid"/>
    <property type="evidence" value="ECO:0007669"/>
    <property type="project" value="TreeGrafter"/>
</dbReference>
<dbReference type="CDD" id="cd00090">
    <property type="entry name" value="HTH_ARSR"/>
    <property type="match status" value="1"/>
</dbReference>
<dbReference type="Gene3D" id="3.30.70.920">
    <property type="match status" value="1"/>
</dbReference>
<dbReference type="Gene3D" id="1.10.10.10">
    <property type="entry name" value="Winged helix-like DNA-binding domain superfamily/Winged helix DNA-binding domain"/>
    <property type="match status" value="1"/>
</dbReference>
<dbReference type="InterPro" id="IPR011991">
    <property type="entry name" value="ArsR-like_HTH"/>
</dbReference>
<dbReference type="InterPro" id="IPR000485">
    <property type="entry name" value="AsnC-type_HTH_dom"/>
</dbReference>
<dbReference type="InterPro" id="IPR011008">
    <property type="entry name" value="Dimeric_a/b-barrel"/>
</dbReference>
<dbReference type="InterPro" id="IPR019888">
    <property type="entry name" value="Tscrpt_reg_AsnC-like"/>
</dbReference>
<dbReference type="InterPro" id="IPR019887">
    <property type="entry name" value="Tscrpt_reg_AsnC/Lrp_C"/>
</dbReference>
<dbReference type="InterPro" id="IPR036388">
    <property type="entry name" value="WH-like_DNA-bd_sf"/>
</dbReference>
<dbReference type="InterPro" id="IPR036390">
    <property type="entry name" value="WH_DNA-bd_sf"/>
</dbReference>
<dbReference type="PANTHER" id="PTHR30154">
    <property type="entry name" value="LEUCINE-RESPONSIVE REGULATORY PROTEIN"/>
    <property type="match status" value="1"/>
</dbReference>
<dbReference type="PANTHER" id="PTHR30154:SF34">
    <property type="entry name" value="TRANSCRIPTIONAL REGULATOR AZLB"/>
    <property type="match status" value="1"/>
</dbReference>
<dbReference type="Pfam" id="PF01037">
    <property type="entry name" value="AsnC_trans_reg"/>
    <property type="match status" value="1"/>
</dbReference>
<dbReference type="Pfam" id="PF13412">
    <property type="entry name" value="HTH_24"/>
    <property type="match status" value="1"/>
</dbReference>
<dbReference type="PRINTS" id="PR00033">
    <property type="entry name" value="HTHASNC"/>
</dbReference>
<dbReference type="SMART" id="SM00344">
    <property type="entry name" value="HTH_ASNC"/>
    <property type="match status" value="1"/>
</dbReference>
<dbReference type="SUPFAM" id="SSF54909">
    <property type="entry name" value="Dimeric alpha+beta barrel"/>
    <property type="match status" value="1"/>
</dbReference>
<dbReference type="SUPFAM" id="SSF46785">
    <property type="entry name" value="Winged helix' DNA-binding domain"/>
    <property type="match status" value="1"/>
</dbReference>
<dbReference type="PROSITE" id="PS50956">
    <property type="entry name" value="HTH_ASNC_2"/>
    <property type="match status" value="1"/>
</dbReference>
<organism>
    <name type="scientific">Pyrococcus horikoshii (strain ATCC 700860 / DSM 12428 / JCM 9974 / NBRC 100139 / OT-3)</name>
    <dbReference type="NCBI Taxonomy" id="70601"/>
    <lineage>
        <taxon>Archaea</taxon>
        <taxon>Methanobacteriati</taxon>
        <taxon>Methanobacteriota</taxon>
        <taxon>Thermococci</taxon>
        <taxon>Thermococcales</taxon>
        <taxon>Thermococcaceae</taxon>
        <taxon>Pyrococcus</taxon>
    </lineage>
</organism>
<evidence type="ECO:0000255" key="1">
    <source>
        <dbReference type="PROSITE-ProRule" id="PRU00319"/>
    </source>
</evidence>
<protein>
    <recommendedName>
        <fullName>Uncharacterized HTH-type transcriptional regulator PH1916</fullName>
    </recommendedName>
</protein>